<dbReference type="EC" id="2.7.7.7" evidence="1"/>
<dbReference type="EMBL" id="CP000673">
    <property type="protein sequence ID" value="EDK35441.1"/>
    <property type="molecule type" value="Genomic_DNA"/>
</dbReference>
<dbReference type="RefSeq" id="WP_012103770.1">
    <property type="nucleotide sequence ID" value="NC_009706.1"/>
</dbReference>
<dbReference type="SMR" id="A5N2U5"/>
<dbReference type="STRING" id="431943.CKL_3439"/>
<dbReference type="KEGG" id="ckl:CKL_3439"/>
<dbReference type="eggNOG" id="COG0389">
    <property type="taxonomic scope" value="Bacteria"/>
</dbReference>
<dbReference type="HOGENOM" id="CLU_012348_1_1_9"/>
<dbReference type="Proteomes" id="UP000002411">
    <property type="component" value="Chromosome"/>
</dbReference>
<dbReference type="GO" id="GO:0005829">
    <property type="term" value="C:cytosol"/>
    <property type="evidence" value="ECO:0007669"/>
    <property type="project" value="TreeGrafter"/>
</dbReference>
<dbReference type="GO" id="GO:0003684">
    <property type="term" value="F:damaged DNA binding"/>
    <property type="evidence" value="ECO:0007669"/>
    <property type="project" value="InterPro"/>
</dbReference>
<dbReference type="GO" id="GO:0003887">
    <property type="term" value="F:DNA-directed DNA polymerase activity"/>
    <property type="evidence" value="ECO:0007669"/>
    <property type="project" value="UniProtKB-UniRule"/>
</dbReference>
<dbReference type="GO" id="GO:0000287">
    <property type="term" value="F:magnesium ion binding"/>
    <property type="evidence" value="ECO:0007669"/>
    <property type="project" value="UniProtKB-UniRule"/>
</dbReference>
<dbReference type="GO" id="GO:0006261">
    <property type="term" value="P:DNA-templated DNA replication"/>
    <property type="evidence" value="ECO:0007669"/>
    <property type="project" value="UniProtKB-UniRule"/>
</dbReference>
<dbReference type="GO" id="GO:0042276">
    <property type="term" value="P:error-prone translesion synthesis"/>
    <property type="evidence" value="ECO:0007669"/>
    <property type="project" value="TreeGrafter"/>
</dbReference>
<dbReference type="GO" id="GO:0009432">
    <property type="term" value="P:SOS response"/>
    <property type="evidence" value="ECO:0007669"/>
    <property type="project" value="TreeGrafter"/>
</dbReference>
<dbReference type="CDD" id="cd03586">
    <property type="entry name" value="PolY_Pol_IV_kappa"/>
    <property type="match status" value="1"/>
</dbReference>
<dbReference type="Gene3D" id="3.30.70.270">
    <property type="match status" value="1"/>
</dbReference>
<dbReference type="Gene3D" id="3.40.1170.60">
    <property type="match status" value="1"/>
</dbReference>
<dbReference type="Gene3D" id="1.10.150.20">
    <property type="entry name" value="5' to 3' exonuclease, C-terminal subdomain"/>
    <property type="match status" value="1"/>
</dbReference>
<dbReference type="Gene3D" id="3.30.1490.100">
    <property type="entry name" value="DNA polymerase, Y-family, little finger domain"/>
    <property type="match status" value="1"/>
</dbReference>
<dbReference type="HAMAP" id="MF_01113">
    <property type="entry name" value="DNApol_IV"/>
    <property type="match status" value="1"/>
</dbReference>
<dbReference type="InterPro" id="IPR043502">
    <property type="entry name" value="DNA/RNA_pol_sf"/>
</dbReference>
<dbReference type="InterPro" id="IPR036775">
    <property type="entry name" value="DNA_pol_Y-fam_lit_finger_sf"/>
</dbReference>
<dbReference type="InterPro" id="IPR017961">
    <property type="entry name" value="DNA_pol_Y-fam_little_finger"/>
</dbReference>
<dbReference type="InterPro" id="IPR050116">
    <property type="entry name" value="DNA_polymerase-Y"/>
</dbReference>
<dbReference type="InterPro" id="IPR022880">
    <property type="entry name" value="DNApol_IV"/>
</dbReference>
<dbReference type="InterPro" id="IPR053848">
    <property type="entry name" value="IMS_HHH_1"/>
</dbReference>
<dbReference type="InterPro" id="IPR043128">
    <property type="entry name" value="Rev_trsase/Diguanyl_cyclase"/>
</dbReference>
<dbReference type="InterPro" id="IPR001126">
    <property type="entry name" value="UmuC"/>
</dbReference>
<dbReference type="NCBIfam" id="NF002492">
    <property type="entry name" value="PRK01810.1"/>
    <property type="match status" value="1"/>
</dbReference>
<dbReference type="NCBIfam" id="NF002677">
    <property type="entry name" value="PRK02406.1"/>
    <property type="match status" value="1"/>
</dbReference>
<dbReference type="PANTHER" id="PTHR11076">
    <property type="entry name" value="DNA REPAIR POLYMERASE UMUC / TRANSFERASE FAMILY MEMBER"/>
    <property type="match status" value="1"/>
</dbReference>
<dbReference type="PANTHER" id="PTHR11076:SF35">
    <property type="entry name" value="DNA REPAIR PROTEIN HOMOLOG YOBH"/>
    <property type="match status" value="1"/>
</dbReference>
<dbReference type="Pfam" id="PF00817">
    <property type="entry name" value="IMS"/>
    <property type="match status" value="1"/>
</dbReference>
<dbReference type="Pfam" id="PF11799">
    <property type="entry name" value="IMS_C"/>
    <property type="match status" value="1"/>
</dbReference>
<dbReference type="Pfam" id="PF21999">
    <property type="entry name" value="IMS_HHH_1"/>
    <property type="match status" value="1"/>
</dbReference>
<dbReference type="SUPFAM" id="SSF56672">
    <property type="entry name" value="DNA/RNA polymerases"/>
    <property type="match status" value="1"/>
</dbReference>
<dbReference type="SUPFAM" id="SSF100879">
    <property type="entry name" value="Lesion bypass DNA polymerase (Y-family), little finger domain"/>
    <property type="match status" value="1"/>
</dbReference>
<dbReference type="PROSITE" id="PS50173">
    <property type="entry name" value="UMUC"/>
    <property type="match status" value="1"/>
</dbReference>
<name>DPO4_CLOK5</name>
<proteinExistence type="inferred from homology"/>
<comment type="function">
    <text evidence="1">Poorly processive, error-prone DNA polymerase involved in untargeted mutagenesis. Copies undamaged DNA at stalled replication forks, which arise in vivo from mismatched or misaligned primer ends. These misaligned primers can be extended by PolIV. Exhibits no 3'-5' exonuclease (proofreading) activity. May be involved in translesional synthesis, in conjunction with the beta clamp from PolIII.</text>
</comment>
<comment type="catalytic activity">
    <reaction evidence="1">
        <text>DNA(n) + a 2'-deoxyribonucleoside 5'-triphosphate = DNA(n+1) + diphosphate</text>
        <dbReference type="Rhea" id="RHEA:22508"/>
        <dbReference type="Rhea" id="RHEA-COMP:17339"/>
        <dbReference type="Rhea" id="RHEA-COMP:17340"/>
        <dbReference type="ChEBI" id="CHEBI:33019"/>
        <dbReference type="ChEBI" id="CHEBI:61560"/>
        <dbReference type="ChEBI" id="CHEBI:173112"/>
        <dbReference type="EC" id="2.7.7.7"/>
    </reaction>
</comment>
<comment type="cofactor">
    <cofactor evidence="1">
        <name>Mg(2+)</name>
        <dbReference type="ChEBI" id="CHEBI:18420"/>
    </cofactor>
    <text evidence="1">Binds 2 magnesium ions per subunit.</text>
</comment>
<comment type="subunit">
    <text evidence="1">Monomer.</text>
</comment>
<comment type="subcellular location">
    <subcellularLocation>
        <location evidence="1">Cytoplasm</location>
    </subcellularLocation>
</comment>
<comment type="similarity">
    <text evidence="1">Belongs to the DNA polymerase type-Y family.</text>
</comment>
<evidence type="ECO:0000255" key="1">
    <source>
        <dbReference type="HAMAP-Rule" id="MF_01113"/>
    </source>
</evidence>
<feature type="chain" id="PRO_1000084882" description="DNA polymerase IV">
    <location>
        <begin position="1"/>
        <end position="400"/>
    </location>
</feature>
<feature type="domain" description="UmuC" evidence="1">
    <location>
        <begin position="5"/>
        <end position="187"/>
    </location>
</feature>
<feature type="active site" evidence="1">
    <location>
        <position position="106"/>
    </location>
</feature>
<feature type="binding site" evidence="1">
    <location>
        <position position="9"/>
    </location>
    <ligand>
        <name>Mg(2+)</name>
        <dbReference type="ChEBI" id="CHEBI:18420"/>
    </ligand>
</feature>
<feature type="binding site" evidence="1">
    <location>
        <position position="105"/>
    </location>
    <ligand>
        <name>Mg(2+)</name>
        <dbReference type="ChEBI" id="CHEBI:18420"/>
    </ligand>
</feature>
<feature type="site" description="Substrate discrimination" evidence="1">
    <location>
        <position position="14"/>
    </location>
</feature>
<protein>
    <recommendedName>
        <fullName evidence="1">DNA polymerase IV</fullName>
        <shortName evidence="1">Pol IV</shortName>
        <ecNumber evidence="1">2.7.7.7</ecNumber>
    </recommendedName>
</protein>
<keyword id="KW-0963">Cytoplasm</keyword>
<keyword id="KW-0227">DNA damage</keyword>
<keyword id="KW-0234">DNA repair</keyword>
<keyword id="KW-0235">DNA replication</keyword>
<keyword id="KW-0238">DNA-binding</keyword>
<keyword id="KW-0239">DNA-directed DNA polymerase</keyword>
<keyword id="KW-0460">Magnesium</keyword>
<keyword id="KW-0479">Metal-binding</keyword>
<keyword id="KW-0515">Mutator protein</keyword>
<keyword id="KW-0548">Nucleotidyltransferase</keyword>
<keyword id="KW-1185">Reference proteome</keyword>
<keyword id="KW-0808">Transferase</keyword>
<organism>
    <name type="scientific">Clostridium kluyveri (strain ATCC 8527 / DSM 555 / NBRC 12016 / NCIMB 10680 / K1)</name>
    <dbReference type="NCBI Taxonomy" id="431943"/>
    <lineage>
        <taxon>Bacteria</taxon>
        <taxon>Bacillati</taxon>
        <taxon>Bacillota</taxon>
        <taxon>Clostridia</taxon>
        <taxon>Eubacteriales</taxon>
        <taxon>Clostridiaceae</taxon>
        <taxon>Clostridium</taxon>
    </lineage>
</organism>
<gene>
    <name evidence="1" type="primary">dinB</name>
    <name type="ordered locus">CKL_3439</name>
</gene>
<reference key="1">
    <citation type="journal article" date="2008" name="Proc. Natl. Acad. Sci. U.S.A.">
        <title>The genome of Clostridium kluyveri, a strict anaerobe with unique metabolic features.</title>
        <authorList>
            <person name="Seedorf H."/>
            <person name="Fricke W.F."/>
            <person name="Veith B."/>
            <person name="Brueggemann H."/>
            <person name="Liesegang H."/>
            <person name="Strittmatter A."/>
            <person name="Miethke M."/>
            <person name="Buckel W."/>
            <person name="Hinderberger J."/>
            <person name="Li F."/>
            <person name="Hagemeier C."/>
            <person name="Thauer R.K."/>
            <person name="Gottschalk G."/>
        </authorList>
    </citation>
    <scope>NUCLEOTIDE SEQUENCE [LARGE SCALE GENOMIC DNA]</scope>
    <source>
        <strain>ATCC 8527 / DSM 555 / NBRC 12016 / NCIMB 10680 / K1</strain>
    </source>
</reference>
<accession>A5N2U5</accession>
<sequence>MHRVIFLVDMNAFFISCESTRHPEIIGKPAAVAGDPKNRSGIILTANYEARKFGVKTTMVLHKVLKLCPNIIIIPPDHCFYKQKSKEVMGILSKYTPVIEKNSIDEAWLDMTGCERIFGRSYQTAECIMKHINSELGLDCSIGISENKFLAKMASQMKKPLGITKLWKKDIELKLWPLPVEFMNGIGKQTARKLREMKIKTIGELANFDRRYLIKKLGKVGAEIHQFANGIDVSPVTPHSHKDVKSIGKSITLAHDISDIESAKVILMELSDKVGMTARKYNKKGHTVQINIKYSNFQSITRQRTITETYLVKEIYSAGIEMLEKNWNERLPVRLLGISLSGFSKYNEDEQISMFNMLEIDNEKSSVRKIDKIEAAIDSIRKKYGDSIIKSGSLIKKSKN</sequence>